<feature type="chain" id="PRO_0000239142" description="Glutathione S-transferase omega-2">
    <location>
        <begin position="1"/>
        <end position="248"/>
    </location>
</feature>
<feature type="domain" description="GST N-terminal">
    <location>
        <begin position="22"/>
        <end position="101"/>
    </location>
</feature>
<feature type="domain" description="GST C-terminal">
    <location>
        <begin position="106"/>
        <end position="231"/>
    </location>
</feature>
<feature type="active site" description="Nucleophile" evidence="1">
    <location>
        <position position="32"/>
    </location>
</feature>
<feature type="binding site" evidence="2">
    <location>
        <position position="59"/>
    </location>
    <ligand>
        <name>glutathione</name>
        <dbReference type="ChEBI" id="CHEBI:57925"/>
    </ligand>
</feature>
<feature type="binding site" evidence="1">
    <location>
        <position position="72"/>
    </location>
    <ligand>
        <name>glutathione</name>
        <dbReference type="ChEBI" id="CHEBI:57925"/>
    </ligand>
</feature>
<feature type="binding site" evidence="2">
    <location>
        <begin position="85"/>
        <end position="86"/>
    </location>
    <ligand>
        <name>glutathione</name>
        <dbReference type="ChEBI" id="CHEBI:57925"/>
    </ligand>
</feature>
<protein>
    <recommendedName>
        <fullName>Glutathione S-transferase omega-2</fullName>
        <shortName>GSTO-2</shortName>
        <ecNumber evidence="2">2.5.1.18</ecNumber>
    </recommendedName>
    <alternativeName>
        <fullName>Glutathione S-transferase omega 2-2</fullName>
        <shortName>GSTO 2-2</shortName>
    </alternativeName>
    <alternativeName>
        <fullName>Glutathione-dependent dehydroascorbate reductase</fullName>
        <ecNumber evidence="2">1.8.5.1</ecNumber>
    </alternativeName>
    <alternativeName>
        <fullName>Monomethylarsonic acid reductase</fullName>
        <shortName>MMA(V) reductase</shortName>
        <ecNumber evidence="2">1.20.4.2</ecNumber>
    </alternativeName>
</protein>
<dbReference type="EC" id="2.5.1.18" evidence="2"/>
<dbReference type="EC" id="1.8.5.1" evidence="2"/>
<dbReference type="EC" id="1.20.4.2" evidence="2"/>
<dbReference type="EMBL" id="BC079295">
    <property type="protein sequence ID" value="AAH79295.1"/>
    <property type="molecule type" value="mRNA"/>
</dbReference>
<dbReference type="RefSeq" id="NP_001012071.1">
    <property type="nucleotide sequence ID" value="NM_001012071.1"/>
</dbReference>
<dbReference type="RefSeq" id="NP_001406671.1">
    <property type="nucleotide sequence ID" value="NM_001419742.1"/>
</dbReference>
<dbReference type="RefSeq" id="XP_006231652.1">
    <property type="nucleotide sequence ID" value="XM_006231590.4"/>
</dbReference>
<dbReference type="RefSeq" id="XP_006231653.1">
    <property type="nucleotide sequence ID" value="XM_006231591.2"/>
</dbReference>
<dbReference type="RefSeq" id="XP_006231654.1">
    <property type="nucleotide sequence ID" value="XM_006231592.3"/>
</dbReference>
<dbReference type="RefSeq" id="XP_008758721.1">
    <property type="nucleotide sequence ID" value="XM_008760499.2"/>
</dbReference>
<dbReference type="RefSeq" id="XP_017444784.1">
    <property type="nucleotide sequence ID" value="XM_017589295.1"/>
</dbReference>
<dbReference type="SMR" id="Q6AXV9"/>
<dbReference type="FunCoup" id="Q6AXV9">
    <property type="interactions" value="371"/>
</dbReference>
<dbReference type="STRING" id="10116.ENSRNOP00000017186"/>
<dbReference type="PhosphoSitePlus" id="Q6AXV9"/>
<dbReference type="PaxDb" id="10116-ENSRNOP00000017186"/>
<dbReference type="GeneID" id="309465"/>
<dbReference type="KEGG" id="rno:309465"/>
<dbReference type="UCSC" id="RGD:1310764">
    <property type="organism name" value="rat"/>
</dbReference>
<dbReference type="AGR" id="RGD:1310764"/>
<dbReference type="CTD" id="119391"/>
<dbReference type="RGD" id="1310764">
    <property type="gene designation" value="Gsto2"/>
</dbReference>
<dbReference type="VEuPathDB" id="HostDB:ENSRNOG00000069697"/>
<dbReference type="eggNOG" id="KOG0406">
    <property type="taxonomic scope" value="Eukaryota"/>
</dbReference>
<dbReference type="HOGENOM" id="CLU_011226_9_2_1"/>
<dbReference type="InParanoid" id="Q6AXV9"/>
<dbReference type="OrthoDB" id="4951845at2759"/>
<dbReference type="PhylomeDB" id="Q6AXV9"/>
<dbReference type="TreeFam" id="TF105325"/>
<dbReference type="Reactome" id="R-RNO-156590">
    <property type="pathway name" value="Glutathione conjugation"/>
</dbReference>
<dbReference type="Reactome" id="R-RNO-196836">
    <property type="pathway name" value="Vitamin C (ascorbate) metabolism"/>
</dbReference>
<dbReference type="PRO" id="PR:Q6AXV9"/>
<dbReference type="Proteomes" id="UP000002494">
    <property type="component" value="Chromosome 1"/>
</dbReference>
<dbReference type="Bgee" id="ENSRNOG00000012801">
    <property type="expression patterns" value="Expressed in testis and 19 other cell types or tissues"/>
</dbReference>
<dbReference type="ExpressionAtlas" id="Q6AXV9">
    <property type="expression patterns" value="baseline"/>
</dbReference>
<dbReference type="GO" id="GO:0005737">
    <property type="term" value="C:cytoplasm"/>
    <property type="evidence" value="ECO:0000318"/>
    <property type="project" value="GO_Central"/>
</dbReference>
<dbReference type="GO" id="GO:0045174">
    <property type="term" value="F:glutathione dehydrogenase (ascorbate) activity"/>
    <property type="evidence" value="ECO:0000250"/>
    <property type="project" value="UniProtKB"/>
</dbReference>
<dbReference type="GO" id="GO:0004364">
    <property type="term" value="F:glutathione transferase activity"/>
    <property type="evidence" value="ECO:0000318"/>
    <property type="project" value="GO_Central"/>
</dbReference>
<dbReference type="GO" id="GO:0042802">
    <property type="term" value="F:identical protein binding"/>
    <property type="evidence" value="ECO:0000266"/>
    <property type="project" value="RGD"/>
</dbReference>
<dbReference type="GO" id="GO:0050610">
    <property type="term" value="F:methylarsonate reductase activity"/>
    <property type="evidence" value="ECO:0007669"/>
    <property type="project" value="UniProtKB-EC"/>
</dbReference>
<dbReference type="GO" id="GO:0016491">
    <property type="term" value="F:oxidoreductase activity"/>
    <property type="evidence" value="ECO:0000250"/>
    <property type="project" value="UniProtKB"/>
</dbReference>
<dbReference type="GO" id="GO:0071243">
    <property type="term" value="P:cellular response to arsenic-containing substance"/>
    <property type="evidence" value="ECO:0000250"/>
    <property type="project" value="UniProtKB"/>
</dbReference>
<dbReference type="GO" id="GO:0006749">
    <property type="term" value="P:glutathione metabolic process"/>
    <property type="evidence" value="ECO:0000318"/>
    <property type="project" value="GO_Central"/>
</dbReference>
<dbReference type="GO" id="GO:0019852">
    <property type="term" value="P:L-ascorbic acid metabolic process"/>
    <property type="evidence" value="ECO:0000250"/>
    <property type="project" value="UniProtKB"/>
</dbReference>
<dbReference type="GO" id="GO:0006805">
    <property type="term" value="P:xenobiotic metabolic process"/>
    <property type="evidence" value="ECO:0000250"/>
    <property type="project" value="UniProtKB"/>
</dbReference>
<dbReference type="CDD" id="cd03184">
    <property type="entry name" value="GST_C_Omega"/>
    <property type="match status" value="1"/>
</dbReference>
<dbReference type="CDD" id="cd03055">
    <property type="entry name" value="GST_N_Omega"/>
    <property type="match status" value="1"/>
</dbReference>
<dbReference type="FunFam" id="3.40.30.10:FF:000075">
    <property type="entry name" value="Glutathione S-transferase omega-1"/>
    <property type="match status" value="1"/>
</dbReference>
<dbReference type="FunFam" id="1.20.1050.10:FF:000100">
    <property type="entry name" value="Glutathione S-transferase omega-2"/>
    <property type="match status" value="1"/>
</dbReference>
<dbReference type="Gene3D" id="1.20.1050.10">
    <property type="match status" value="1"/>
</dbReference>
<dbReference type="Gene3D" id="3.40.30.10">
    <property type="entry name" value="Glutaredoxin"/>
    <property type="match status" value="1"/>
</dbReference>
<dbReference type="InterPro" id="IPR010987">
    <property type="entry name" value="Glutathione-S-Trfase_C-like"/>
</dbReference>
<dbReference type="InterPro" id="IPR036282">
    <property type="entry name" value="Glutathione-S-Trfase_C_sf"/>
</dbReference>
<dbReference type="InterPro" id="IPR040079">
    <property type="entry name" value="Glutathione_S-Trfase"/>
</dbReference>
<dbReference type="InterPro" id="IPR004045">
    <property type="entry name" value="Glutathione_S-Trfase_N"/>
</dbReference>
<dbReference type="InterPro" id="IPR004046">
    <property type="entry name" value="GST_C"/>
</dbReference>
<dbReference type="InterPro" id="IPR005442">
    <property type="entry name" value="GST_omega"/>
</dbReference>
<dbReference type="InterPro" id="IPR050983">
    <property type="entry name" value="GST_Omega/HSP26"/>
</dbReference>
<dbReference type="InterPro" id="IPR036249">
    <property type="entry name" value="Thioredoxin-like_sf"/>
</dbReference>
<dbReference type="PANTHER" id="PTHR43968">
    <property type="match status" value="1"/>
</dbReference>
<dbReference type="PANTHER" id="PTHR43968:SF4">
    <property type="entry name" value="GLUTATHIONE S-TRANSFERASE OMEGA-2"/>
    <property type="match status" value="1"/>
</dbReference>
<dbReference type="Pfam" id="PF14497">
    <property type="entry name" value="GST_C_3"/>
    <property type="match status" value="1"/>
</dbReference>
<dbReference type="Pfam" id="PF13409">
    <property type="entry name" value="GST_N_2"/>
    <property type="match status" value="1"/>
</dbReference>
<dbReference type="PRINTS" id="PR01625">
    <property type="entry name" value="GSTRNSFRASEO"/>
</dbReference>
<dbReference type="SFLD" id="SFLDS00019">
    <property type="entry name" value="Glutathione_Transferase_(cytos"/>
    <property type="match status" value="1"/>
</dbReference>
<dbReference type="SFLD" id="SFLDG00358">
    <property type="entry name" value="Main_(cytGST)"/>
    <property type="match status" value="1"/>
</dbReference>
<dbReference type="SUPFAM" id="SSF47616">
    <property type="entry name" value="GST C-terminal domain-like"/>
    <property type="match status" value="1"/>
</dbReference>
<dbReference type="SUPFAM" id="SSF52833">
    <property type="entry name" value="Thioredoxin-like"/>
    <property type="match status" value="1"/>
</dbReference>
<dbReference type="PROSITE" id="PS50405">
    <property type="entry name" value="GST_CTER"/>
    <property type="match status" value="1"/>
</dbReference>
<dbReference type="PROSITE" id="PS50404">
    <property type="entry name" value="GST_NTER"/>
    <property type="match status" value="1"/>
</dbReference>
<accession>Q6AXV9</accession>
<proteinExistence type="evidence at transcript level"/>
<name>GSTO2_RAT</name>
<evidence type="ECO:0000250" key="1">
    <source>
        <dbReference type="UniProtKB" id="P78417"/>
    </source>
</evidence>
<evidence type="ECO:0000250" key="2">
    <source>
        <dbReference type="UniProtKB" id="Q9H4Y5"/>
    </source>
</evidence>
<evidence type="ECO:0000305" key="3"/>
<sequence>MSGDLTRCLGKGSCPPGPVPEGVIRIYSMRFCPYSHRTRLVLKAKSIRHEIININLKNKPDWYYTKHPFGQVPVLENSQCQLIYESVIACEYLDDVFPGRKLFPYDPYERARQKMLLELFCKVPQLSKECLVALRCGRDCTDLKVALRQELCNLEEILEYQNTTFFGGDSISMIDYLVWPWFERLDVYGLADCVNHTPMLRLWISSMKQDPAVCALHIDKNIFLGFLNLYFQNNPCAFDFGLCGPIVR</sequence>
<gene>
    <name type="primary">Gsto2</name>
</gene>
<keyword id="KW-0560">Oxidoreductase</keyword>
<keyword id="KW-1185">Reference proteome</keyword>
<keyword id="KW-0808">Transferase</keyword>
<reference key="1">
    <citation type="journal article" date="2004" name="Genome Res.">
        <title>The status, quality, and expansion of the NIH full-length cDNA project: the Mammalian Gene Collection (MGC).</title>
        <authorList>
            <consortium name="The MGC Project Team"/>
        </authorList>
    </citation>
    <scope>NUCLEOTIDE SEQUENCE [LARGE SCALE MRNA]</scope>
    <source>
        <tissue>Testis</tissue>
    </source>
</reference>
<comment type="function">
    <text evidence="2">Exhibits glutathione-dependent thiol transferase activity. Has high dehydroascorbate reductase activity and may contribute to the recycling of ascorbic acid. Participates in the biotransformation of inorganic arsenic and reduces monomethylarsonic acid (MMA).</text>
</comment>
<comment type="catalytic activity">
    <reaction evidence="2">
        <text>RX + glutathione = an S-substituted glutathione + a halide anion + H(+)</text>
        <dbReference type="Rhea" id="RHEA:16437"/>
        <dbReference type="ChEBI" id="CHEBI:15378"/>
        <dbReference type="ChEBI" id="CHEBI:16042"/>
        <dbReference type="ChEBI" id="CHEBI:17792"/>
        <dbReference type="ChEBI" id="CHEBI:57925"/>
        <dbReference type="ChEBI" id="CHEBI:90779"/>
        <dbReference type="EC" id="2.5.1.18"/>
    </reaction>
</comment>
<comment type="catalytic activity">
    <reaction evidence="2">
        <text>L-dehydroascorbate + 2 glutathione = glutathione disulfide + L-ascorbate</text>
        <dbReference type="Rhea" id="RHEA:24424"/>
        <dbReference type="ChEBI" id="CHEBI:38290"/>
        <dbReference type="ChEBI" id="CHEBI:57925"/>
        <dbReference type="ChEBI" id="CHEBI:58297"/>
        <dbReference type="ChEBI" id="CHEBI:58539"/>
        <dbReference type="EC" id="1.8.5.1"/>
    </reaction>
</comment>
<comment type="catalytic activity">
    <reaction evidence="2">
        <text>methylarsonate + 2 glutathione + H(+) = methylarsonous acid + glutathione disulfide + H2O</text>
        <dbReference type="Rhea" id="RHEA:15969"/>
        <dbReference type="ChEBI" id="CHEBI:15377"/>
        <dbReference type="ChEBI" id="CHEBI:15378"/>
        <dbReference type="ChEBI" id="CHEBI:17826"/>
        <dbReference type="ChEBI" id="CHEBI:33409"/>
        <dbReference type="ChEBI" id="CHEBI:57925"/>
        <dbReference type="ChEBI" id="CHEBI:58297"/>
        <dbReference type="EC" id="1.20.4.2"/>
    </reaction>
</comment>
<comment type="similarity">
    <text evidence="3">Belongs to the GST superfamily. Omega family.</text>
</comment>
<organism>
    <name type="scientific">Rattus norvegicus</name>
    <name type="common">Rat</name>
    <dbReference type="NCBI Taxonomy" id="10116"/>
    <lineage>
        <taxon>Eukaryota</taxon>
        <taxon>Metazoa</taxon>
        <taxon>Chordata</taxon>
        <taxon>Craniata</taxon>
        <taxon>Vertebrata</taxon>
        <taxon>Euteleostomi</taxon>
        <taxon>Mammalia</taxon>
        <taxon>Eutheria</taxon>
        <taxon>Euarchontoglires</taxon>
        <taxon>Glires</taxon>
        <taxon>Rodentia</taxon>
        <taxon>Myomorpha</taxon>
        <taxon>Muroidea</taxon>
        <taxon>Muridae</taxon>
        <taxon>Murinae</taxon>
        <taxon>Rattus</taxon>
    </lineage>
</organism>